<gene>
    <name evidence="1" type="primary">guaA</name>
    <name type="ordered locus">MMAR_1148</name>
</gene>
<reference key="1">
    <citation type="journal article" date="2008" name="Genome Res.">
        <title>Insights from the complete genome sequence of Mycobacterium marinum on the evolution of Mycobacterium tuberculosis.</title>
        <authorList>
            <person name="Stinear T.P."/>
            <person name="Seemann T."/>
            <person name="Harrison P.F."/>
            <person name="Jenkin G.A."/>
            <person name="Davies J.K."/>
            <person name="Johnson P.D."/>
            <person name="Abdellah Z."/>
            <person name="Arrowsmith C."/>
            <person name="Chillingworth T."/>
            <person name="Churcher C."/>
            <person name="Clarke K."/>
            <person name="Cronin A."/>
            <person name="Davis P."/>
            <person name="Goodhead I."/>
            <person name="Holroyd N."/>
            <person name="Jagels K."/>
            <person name="Lord A."/>
            <person name="Moule S."/>
            <person name="Mungall K."/>
            <person name="Norbertczak H."/>
            <person name="Quail M.A."/>
            <person name="Rabbinowitsch E."/>
            <person name="Walker D."/>
            <person name="White B."/>
            <person name="Whitehead S."/>
            <person name="Small P.L."/>
            <person name="Brosch R."/>
            <person name="Ramakrishnan L."/>
            <person name="Fischbach M.A."/>
            <person name="Parkhill J."/>
            <person name="Cole S.T."/>
        </authorList>
    </citation>
    <scope>NUCLEOTIDE SEQUENCE [LARGE SCALE GENOMIC DNA]</scope>
    <source>
        <strain>ATCC BAA-535 / M</strain>
    </source>
</reference>
<organism>
    <name type="scientific">Mycobacterium marinum (strain ATCC BAA-535 / M)</name>
    <dbReference type="NCBI Taxonomy" id="216594"/>
    <lineage>
        <taxon>Bacteria</taxon>
        <taxon>Bacillati</taxon>
        <taxon>Actinomycetota</taxon>
        <taxon>Actinomycetes</taxon>
        <taxon>Mycobacteriales</taxon>
        <taxon>Mycobacteriaceae</taxon>
        <taxon>Mycobacterium</taxon>
        <taxon>Mycobacterium ulcerans group</taxon>
    </lineage>
</organism>
<protein>
    <recommendedName>
        <fullName evidence="1">GMP synthase [glutamine-hydrolyzing]</fullName>
        <ecNumber evidence="1">6.3.5.2</ecNumber>
    </recommendedName>
    <alternativeName>
        <fullName evidence="1">GMP synthetase</fullName>
    </alternativeName>
    <alternativeName>
        <fullName evidence="1">Glutamine amidotransferase</fullName>
    </alternativeName>
</protein>
<proteinExistence type="inferred from homology"/>
<feature type="chain" id="PRO_1000120338" description="GMP synthase [glutamine-hydrolyzing]">
    <location>
        <begin position="1"/>
        <end position="525"/>
    </location>
</feature>
<feature type="domain" description="Glutamine amidotransferase type-1" evidence="1">
    <location>
        <begin position="16"/>
        <end position="205"/>
    </location>
</feature>
<feature type="domain" description="GMPS ATP-PPase" evidence="1">
    <location>
        <begin position="206"/>
        <end position="399"/>
    </location>
</feature>
<feature type="active site" description="Nucleophile" evidence="1">
    <location>
        <position position="93"/>
    </location>
</feature>
<feature type="active site" evidence="1">
    <location>
        <position position="179"/>
    </location>
</feature>
<feature type="active site" evidence="1">
    <location>
        <position position="181"/>
    </location>
</feature>
<feature type="binding site" evidence="1">
    <location>
        <begin position="233"/>
        <end position="239"/>
    </location>
    <ligand>
        <name>ATP</name>
        <dbReference type="ChEBI" id="CHEBI:30616"/>
    </ligand>
</feature>
<sequence length="525" mass="56170">MAEPVDLDVAGPVGRPVLVVDFGAQYAQLIARRVREARVFSEVIPHTTSIEEIKARDPLALVLSGGPASVYAPGAPQLDPALFDLGLPVFGICYGFQVMAQALGGTVAHTGTSEYGRTELKVLGGDLHSDLPDIQPVWMSHGDAVTAAPDGFEVVASSAGAAVAAFENRERRLAGVQYHPEVMHTPHGQQILGRFLHDFAGIGARWTPANIANALIEQVRTQIGDGHAICGLSGGVDSAVAAALVQRAIGDRLTCVFVDHGLLRAGERAQVERDFVAATKANLVTVDVADTFLAALSGVTDPEGKRKIIGRQFIRAFEGAVRDVLDGRDIEFLVQGTLYPDVVESGGGSGTANIKSHHNVGGLPDDLKFALVEPLRLLFKDEVRAVGRELGLPEEIVARQPFPGPGLGIRIVGEVTGQRLDTLRRADSIAREELTAAGLDNQIWQCPVVLLADVRSVGVQGDNRTYGHPIVLRPVSSEDAMTADWTRVPFEVLERISTRITNEVPEVNRVVLDVTSKPPGTIEWE</sequence>
<accession>B2HDP0</accession>
<keyword id="KW-0067">ATP-binding</keyword>
<keyword id="KW-0315">Glutamine amidotransferase</keyword>
<keyword id="KW-0332">GMP biosynthesis</keyword>
<keyword id="KW-0436">Ligase</keyword>
<keyword id="KW-0547">Nucleotide-binding</keyword>
<keyword id="KW-0658">Purine biosynthesis</keyword>
<keyword id="KW-1185">Reference proteome</keyword>
<dbReference type="EC" id="6.3.5.2" evidence="1"/>
<dbReference type="EMBL" id="CP000854">
    <property type="protein sequence ID" value="ACC39606.1"/>
    <property type="molecule type" value="Genomic_DNA"/>
</dbReference>
<dbReference type="RefSeq" id="WP_012393031.1">
    <property type="nucleotide sequence ID" value="NC_010612.1"/>
</dbReference>
<dbReference type="SMR" id="B2HDP0"/>
<dbReference type="STRING" id="216594.MMAR_1148"/>
<dbReference type="MEROPS" id="C26.A07"/>
<dbReference type="KEGG" id="mmi:MMAR_1148"/>
<dbReference type="eggNOG" id="COG0518">
    <property type="taxonomic scope" value="Bacteria"/>
</dbReference>
<dbReference type="eggNOG" id="COG0519">
    <property type="taxonomic scope" value="Bacteria"/>
</dbReference>
<dbReference type="HOGENOM" id="CLU_014340_0_5_11"/>
<dbReference type="OrthoDB" id="9802219at2"/>
<dbReference type="UniPathway" id="UPA00189">
    <property type="reaction ID" value="UER00296"/>
</dbReference>
<dbReference type="Proteomes" id="UP000001190">
    <property type="component" value="Chromosome"/>
</dbReference>
<dbReference type="GO" id="GO:0005829">
    <property type="term" value="C:cytosol"/>
    <property type="evidence" value="ECO:0007669"/>
    <property type="project" value="TreeGrafter"/>
</dbReference>
<dbReference type="GO" id="GO:0005524">
    <property type="term" value="F:ATP binding"/>
    <property type="evidence" value="ECO:0007669"/>
    <property type="project" value="UniProtKB-UniRule"/>
</dbReference>
<dbReference type="GO" id="GO:0003921">
    <property type="term" value="F:GMP synthase activity"/>
    <property type="evidence" value="ECO:0007669"/>
    <property type="project" value="InterPro"/>
</dbReference>
<dbReference type="CDD" id="cd01742">
    <property type="entry name" value="GATase1_GMP_Synthase"/>
    <property type="match status" value="1"/>
</dbReference>
<dbReference type="CDD" id="cd01997">
    <property type="entry name" value="GMP_synthase_C"/>
    <property type="match status" value="1"/>
</dbReference>
<dbReference type="FunFam" id="3.30.300.10:FF:000002">
    <property type="entry name" value="GMP synthase [glutamine-hydrolyzing]"/>
    <property type="match status" value="1"/>
</dbReference>
<dbReference type="FunFam" id="3.40.50.620:FF:000001">
    <property type="entry name" value="GMP synthase [glutamine-hydrolyzing]"/>
    <property type="match status" value="1"/>
</dbReference>
<dbReference type="FunFam" id="3.40.50.880:FF:000001">
    <property type="entry name" value="GMP synthase [glutamine-hydrolyzing]"/>
    <property type="match status" value="1"/>
</dbReference>
<dbReference type="Gene3D" id="3.30.300.10">
    <property type="match status" value="1"/>
</dbReference>
<dbReference type="Gene3D" id="3.40.50.880">
    <property type="match status" value="1"/>
</dbReference>
<dbReference type="Gene3D" id="3.40.50.620">
    <property type="entry name" value="HUPs"/>
    <property type="match status" value="1"/>
</dbReference>
<dbReference type="HAMAP" id="MF_00344">
    <property type="entry name" value="GMP_synthase"/>
    <property type="match status" value="1"/>
</dbReference>
<dbReference type="InterPro" id="IPR029062">
    <property type="entry name" value="Class_I_gatase-like"/>
</dbReference>
<dbReference type="InterPro" id="IPR017926">
    <property type="entry name" value="GATASE"/>
</dbReference>
<dbReference type="InterPro" id="IPR001674">
    <property type="entry name" value="GMP_synth_C"/>
</dbReference>
<dbReference type="InterPro" id="IPR004739">
    <property type="entry name" value="GMP_synth_GATase"/>
</dbReference>
<dbReference type="InterPro" id="IPR022955">
    <property type="entry name" value="GMP_synthase"/>
</dbReference>
<dbReference type="InterPro" id="IPR025777">
    <property type="entry name" value="GMPS_ATP_PPase_dom"/>
</dbReference>
<dbReference type="InterPro" id="IPR022310">
    <property type="entry name" value="NAD/GMP_synthase"/>
</dbReference>
<dbReference type="InterPro" id="IPR014729">
    <property type="entry name" value="Rossmann-like_a/b/a_fold"/>
</dbReference>
<dbReference type="NCBIfam" id="TIGR00884">
    <property type="entry name" value="guaA_Cterm"/>
    <property type="match status" value="1"/>
</dbReference>
<dbReference type="NCBIfam" id="TIGR00888">
    <property type="entry name" value="guaA_Nterm"/>
    <property type="match status" value="1"/>
</dbReference>
<dbReference type="NCBIfam" id="NF000848">
    <property type="entry name" value="PRK00074.1"/>
    <property type="match status" value="1"/>
</dbReference>
<dbReference type="PANTHER" id="PTHR11922:SF2">
    <property type="entry name" value="GMP SYNTHASE [GLUTAMINE-HYDROLYZING]"/>
    <property type="match status" value="1"/>
</dbReference>
<dbReference type="PANTHER" id="PTHR11922">
    <property type="entry name" value="GMP SYNTHASE-RELATED"/>
    <property type="match status" value="1"/>
</dbReference>
<dbReference type="Pfam" id="PF00117">
    <property type="entry name" value="GATase"/>
    <property type="match status" value="1"/>
</dbReference>
<dbReference type="Pfam" id="PF00958">
    <property type="entry name" value="GMP_synt_C"/>
    <property type="match status" value="1"/>
</dbReference>
<dbReference type="Pfam" id="PF02540">
    <property type="entry name" value="NAD_synthase"/>
    <property type="match status" value="1"/>
</dbReference>
<dbReference type="PRINTS" id="PR00097">
    <property type="entry name" value="ANTSNTHASEII"/>
</dbReference>
<dbReference type="PRINTS" id="PR00099">
    <property type="entry name" value="CPSGATASE"/>
</dbReference>
<dbReference type="PRINTS" id="PR00096">
    <property type="entry name" value="GATASE"/>
</dbReference>
<dbReference type="SUPFAM" id="SSF52402">
    <property type="entry name" value="Adenine nucleotide alpha hydrolases-like"/>
    <property type="match status" value="1"/>
</dbReference>
<dbReference type="SUPFAM" id="SSF52317">
    <property type="entry name" value="Class I glutamine amidotransferase-like"/>
    <property type="match status" value="1"/>
</dbReference>
<dbReference type="SUPFAM" id="SSF54810">
    <property type="entry name" value="GMP synthetase C-terminal dimerisation domain"/>
    <property type="match status" value="1"/>
</dbReference>
<dbReference type="PROSITE" id="PS51273">
    <property type="entry name" value="GATASE_TYPE_1"/>
    <property type="match status" value="1"/>
</dbReference>
<dbReference type="PROSITE" id="PS51553">
    <property type="entry name" value="GMPS_ATP_PPASE"/>
    <property type="match status" value="1"/>
</dbReference>
<comment type="function">
    <text evidence="1">Catalyzes the synthesis of GMP from XMP.</text>
</comment>
<comment type="catalytic activity">
    <reaction evidence="1">
        <text>XMP + L-glutamine + ATP + H2O = GMP + L-glutamate + AMP + diphosphate + 2 H(+)</text>
        <dbReference type="Rhea" id="RHEA:11680"/>
        <dbReference type="ChEBI" id="CHEBI:15377"/>
        <dbReference type="ChEBI" id="CHEBI:15378"/>
        <dbReference type="ChEBI" id="CHEBI:29985"/>
        <dbReference type="ChEBI" id="CHEBI:30616"/>
        <dbReference type="ChEBI" id="CHEBI:33019"/>
        <dbReference type="ChEBI" id="CHEBI:57464"/>
        <dbReference type="ChEBI" id="CHEBI:58115"/>
        <dbReference type="ChEBI" id="CHEBI:58359"/>
        <dbReference type="ChEBI" id="CHEBI:456215"/>
        <dbReference type="EC" id="6.3.5.2"/>
    </reaction>
</comment>
<comment type="pathway">
    <text evidence="1">Purine metabolism; GMP biosynthesis; GMP from XMP (L-Gln route): step 1/1.</text>
</comment>
<comment type="subunit">
    <text evidence="1">Homodimer.</text>
</comment>
<evidence type="ECO:0000255" key="1">
    <source>
        <dbReference type="HAMAP-Rule" id="MF_00344"/>
    </source>
</evidence>
<name>GUAA_MYCMM</name>